<dbReference type="EC" id="2.7.1.50" evidence="1"/>
<dbReference type="EMBL" id="BX950229">
    <property type="protein sequence ID" value="CAF30694.1"/>
    <property type="status" value="ALT_INIT"/>
    <property type="molecule type" value="Genomic_DNA"/>
</dbReference>
<dbReference type="RefSeq" id="WP_048064098.1">
    <property type="nucleotide sequence ID" value="NC_005791.1"/>
</dbReference>
<dbReference type="SMR" id="Q6LY53"/>
<dbReference type="STRING" id="267377.MMP1138"/>
<dbReference type="EnsemblBacteria" id="CAF30694">
    <property type="protein sequence ID" value="CAF30694"/>
    <property type="gene ID" value="MMP1138"/>
</dbReference>
<dbReference type="GeneID" id="2762053"/>
<dbReference type="KEGG" id="mmp:MMP1138"/>
<dbReference type="PATRIC" id="fig|267377.15.peg.1171"/>
<dbReference type="eggNOG" id="arCOG00019">
    <property type="taxonomic scope" value="Archaea"/>
</dbReference>
<dbReference type="HOGENOM" id="CLU_019943_0_1_2"/>
<dbReference type="OrthoDB" id="214286at2157"/>
<dbReference type="UniPathway" id="UPA00060">
    <property type="reaction ID" value="UER00139"/>
</dbReference>
<dbReference type="Proteomes" id="UP000000590">
    <property type="component" value="Chromosome"/>
</dbReference>
<dbReference type="GO" id="GO:0005524">
    <property type="term" value="F:ATP binding"/>
    <property type="evidence" value="ECO:0007669"/>
    <property type="project" value="UniProtKB-UniRule"/>
</dbReference>
<dbReference type="GO" id="GO:0004417">
    <property type="term" value="F:hydroxyethylthiazole kinase activity"/>
    <property type="evidence" value="ECO:0007669"/>
    <property type="project" value="UniProtKB-UniRule"/>
</dbReference>
<dbReference type="GO" id="GO:0000287">
    <property type="term" value="F:magnesium ion binding"/>
    <property type="evidence" value="ECO:0007669"/>
    <property type="project" value="UniProtKB-UniRule"/>
</dbReference>
<dbReference type="GO" id="GO:0009228">
    <property type="term" value="P:thiamine biosynthetic process"/>
    <property type="evidence" value="ECO:0007669"/>
    <property type="project" value="UniProtKB-KW"/>
</dbReference>
<dbReference type="GO" id="GO:0009229">
    <property type="term" value="P:thiamine diphosphate biosynthetic process"/>
    <property type="evidence" value="ECO:0007669"/>
    <property type="project" value="UniProtKB-UniRule"/>
</dbReference>
<dbReference type="CDD" id="cd01170">
    <property type="entry name" value="THZ_kinase"/>
    <property type="match status" value="1"/>
</dbReference>
<dbReference type="Gene3D" id="3.40.1190.20">
    <property type="match status" value="1"/>
</dbReference>
<dbReference type="HAMAP" id="MF_00228">
    <property type="entry name" value="Thz_kinase"/>
    <property type="match status" value="1"/>
</dbReference>
<dbReference type="InterPro" id="IPR000417">
    <property type="entry name" value="Hyethyz_kinase"/>
</dbReference>
<dbReference type="InterPro" id="IPR029056">
    <property type="entry name" value="Ribokinase-like"/>
</dbReference>
<dbReference type="NCBIfam" id="NF006830">
    <property type="entry name" value="PRK09355.1"/>
    <property type="match status" value="1"/>
</dbReference>
<dbReference type="NCBIfam" id="TIGR00694">
    <property type="entry name" value="thiM"/>
    <property type="match status" value="1"/>
</dbReference>
<dbReference type="Pfam" id="PF02110">
    <property type="entry name" value="HK"/>
    <property type="match status" value="1"/>
</dbReference>
<dbReference type="PIRSF" id="PIRSF000513">
    <property type="entry name" value="Thz_kinase"/>
    <property type="match status" value="1"/>
</dbReference>
<dbReference type="PRINTS" id="PR01099">
    <property type="entry name" value="HYETHTZKNASE"/>
</dbReference>
<dbReference type="SUPFAM" id="SSF53613">
    <property type="entry name" value="Ribokinase-like"/>
    <property type="match status" value="1"/>
</dbReference>
<reference key="1">
    <citation type="journal article" date="2004" name="J. Bacteriol.">
        <title>Complete genome sequence of the genetically tractable hydrogenotrophic methanogen Methanococcus maripaludis.</title>
        <authorList>
            <person name="Hendrickson E.L."/>
            <person name="Kaul R."/>
            <person name="Zhou Y."/>
            <person name="Bovee D."/>
            <person name="Chapman P."/>
            <person name="Chung J."/>
            <person name="Conway de Macario E."/>
            <person name="Dodsworth J.A."/>
            <person name="Gillett W."/>
            <person name="Graham D.E."/>
            <person name="Hackett M."/>
            <person name="Haydock A.K."/>
            <person name="Kang A."/>
            <person name="Land M.L."/>
            <person name="Levy R."/>
            <person name="Lie T.J."/>
            <person name="Major T.A."/>
            <person name="Moore B.C."/>
            <person name="Porat I."/>
            <person name="Palmeiri A."/>
            <person name="Rouse G."/>
            <person name="Saenphimmachak C."/>
            <person name="Soell D."/>
            <person name="Van Dien S."/>
            <person name="Wang T."/>
            <person name="Whitman W.B."/>
            <person name="Xia Q."/>
            <person name="Zhang Y."/>
            <person name="Larimer F.W."/>
            <person name="Olson M.V."/>
            <person name="Leigh J.A."/>
        </authorList>
    </citation>
    <scope>NUCLEOTIDE SEQUENCE [LARGE SCALE GENOMIC DNA]</scope>
    <source>
        <strain>DSM 14266 / JCM 13030 / NBRC 101832 / S2 / LL</strain>
    </source>
</reference>
<sequence length="266" mass="28378">MDFVAKNLTKLRETNPLVQNITNYVVMNSTANSLLALGASPVMAHAMDELEEMVSIASALVVNIGTLDEYWIPSMEKAAKIASDLKKPIVLDPVGAGATKLRTKTALKILDFADISVLRGNFGEIAAVLGEHGKTRGVDSAAYDSNEAIELSKNAAKEFNTVSAVTGPVDHVSNGKEIYSISNGHSMLSKVTGTGCATTSIIGAFSAVDDPLKAAVSGLVVYGISAEMAFTEAPYPGTFQAKVYDWLYRIDEKLVLEKAKVNKFEI</sequence>
<accession>Q6LY53</accession>
<gene>
    <name evidence="1" type="primary">thiM</name>
    <name type="ordered locus">MMP1138</name>
</gene>
<proteinExistence type="inferred from homology"/>
<organism>
    <name type="scientific">Methanococcus maripaludis (strain DSM 14266 / JCM 13030 / NBRC 101832 / S2 / LL)</name>
    <dbReference type="NCBI Taxonomy" id="267377"/>
    <lineage>
        <taxon>Archaea</taxon>
        <taxon>Methanobacteriati</taxon>
        <taxon>Methanobacteriota</taxon>
        <taxon>Methanomada group</taxon>
        <taxon>Methanococci</taxon>
        <taxon>Methanococcales</taxon>
        <taxon>Methanococcaceae</taxon>
        <taxon>Methanococcus</taxon>
    </lineage>
</organism>
<feature type="chain" id="PRO_0000383915" description="Hydroxyethylthiazole kinase">
    <location>
        <begin position="1"/>
        <end position="266"/>
    </location>
</feature>
<feature type="binding site" evidence="1">
    <location>
        <position position="43"/>
    </location>
    <ligand>
        <name>substrate</name>
    </ligand>
</feature>
<feature type="binding site" evidence="1">
    <location>
        <position position="119"/>
    </location>
    <ligand>
        <name>ATP</name>
        <dbReference type="ChEBI" id="CHEBI:30616"/>
    </ligand>
</feature>
<feature type="binding site" evidence="1">
    <location>
        <position position="166"/>
    </location>
    <ligand>
        <name>ATP</name>
        <dbReference type="ChEBI" id="CHEBI:30616"/>
    </ligand>
</feature>
<feature type="binding site" evidence="1">
    <location>
        <position position="193"/>
    </location>
    <ligand>
        <name>substrate</name>
    </ligand>
</feature>
<comment type="function">
    <text evidence="1">Catalyzes the phosphorylation of the hydroxyl group of 4-methyl-5-beta-hydroxyethylthiazole (THZ).</text>
</comment>
<comment type="catalytic activity">
    <reaction evidence="1">
        <text>5-(2-hydroxyethyl)-4-methylthiazole + ATP = 4-methyl-5-(2-phosphooxyethyl)-thiazole + ADP + H(+)</text>
        <dbReference type="Rhea" id="RHEA:24212"/>
        <dbReference type="ChEBI" id="CHEBI:15378"/>
        <dbReference type="ChEBI" id="CHEBI:17957"/>
        <dbReference type="ChEBI" id="CHEBI:30616"/>
        <dbReference type="ChEBI" id="CHEBI:58296"/>
        <dbReference type="ChEBI" id="CHEBI:456216"/>
        <dbReference type="EC" id="2.7.1.50"/>
    </reaction>
</comment>
<comment type="cofactor">
    <cofactor evidence="1">
        <name>Mg(2+)</name>
        <dbReference type="ChEBI" id="CHEBI:18420"/>
    </cofactor>
</comment>
<comment type="pathway">
    <text evidence="1">Cofactor biosynthesis; thiamine diphosphate biosynthesis; 4-methyl-5-(2-phosphoethyl)-thiazole from 5-(2-hydroxyethyl)-4-methylthiazole: step 1/1.</text>
</comment>
<comment type="similarity">
    <text evidence="1">Belongs to the Thz kinase family.</text>
</comment>
<comment type="sequence caution" evidence="2">
    <conflict type="erroneous initiation">
        <sequence resource="EMBL-CDS" id="CAF30694"/>
    </conflict>
</comment>
<name>THIM_METMP</name>
<evidence type="ECO:0000255" key="1">
    <source>
        <dbReference type="HAMAP-Rule" id="MF_00228"/>
    </source>
</evidence>
<evidence type="ECO:0000305" key="2"/>
<protein>
    <recommendedName>
        <fullName evidence="1">Hydroxyethylthiazole kinase</fullName>
        <ecNumber evidence="1">2.7.1.50</ecNumber>
    </recommendedName>
    <alternativeName>
        <fullName evidence="1">4-methyl-5-beta-hydroxyethylthiazole kinase</fullName>
        <shortName evidence="1">TH kinase</shortName>
        <shortName evidence="1">Thz kinase</shortName>
    </alternativeName>
</protein>
<keyword id="KW-0067">ATP-binding</keyword>
<keyword id="KW-0418">Kinase</keyword>
<keyword id="KW-0460">Magnesium</keyword>
<keyword id="KW-0479">Metal-binding</keyword>
<keyword id="KW-0547">Nucleotide-binding</keyword>
<keyword id="KW-1185">Reference proteome</keyword>
<keyword id="KW-0784">Thiamine biosynthesis</keyword>
<keyword id="KW-0808">Transferase</keyword>